<feature type="chain" id="PRO_1000071049" description="Phospho-N-acetylmuramoyl-pentapeptide-transferase">
    <location>
        <begin position="1"/>
        <end position="367"/>
    </location>
</feature>
<feature type="transmembrane region" description="Helical" evidence="1">
    <location>
        <begin position="28"/>
        <end position="48"/>
    </location>
</feature>
<feature type="transmembrane region" description="Helical" evidence="1">
    <location>
        <begin position="75"/>
        <end position="95"/>
    </location>
</feature>
<feature type="transmembrane region" description="Helical" evidence="1">
    <location>
        <begin position="96"/>
        <end position="116"/>
    </location>
</feature>
<feature type="transmembrane region" description="Helical" evidence="1">
    <location>
        <begin position="134"/>
        <end position="154"/>
    </location>
</feature>
<feature type="transmembrane region" description="Helical" evidence="1">
    <location>
        <begin position="175"/>
        <end position="195"/>
    </location>
</feature>
<feature type="transmembrane region" description="Helical" evidence="1">
    <location>
        <begin position="206"/>
        <end position="226"/>
    </location>
</feature>
<feature type="transmembrane region" description="Helical" evidence="1">
    <location>
        <begin position="243"/>
        <end position="263"/>
    </location>
</feature>
<feature type="transmembrane region" description="Helical" evidence="1">
    <location>
        <begin position="271"/>
        <end position="291"/>
    </location>
</feature>
<feature type="transmembrane region" description="Helical" evidence="1">
    <location>
        <begin position="295"/>
        <end position="315"/>
    </location>
</feature>
<feature type="transmembrane region" description="Helical" evidence="1">
    <location>
        <begin position="344"/>
        <end position="364"/>
    </location>
</feature>
<reference key="1">
    <citation type="submission" date="2006-08" db="EMBL/GenBank/DDBJ databases">
        <title>Complete sequence of Maricaulis maris MCS10.</title>
        <authorList>
            <consortium name="US DOE Joint Genome Institute"/>
            <person name="Copeland A."/>
            <person name="Lucas S."/>
            <person name="Lapidus A."/>
            <person name="Barry K."/>
            <person name="Detter J.C."/>
            <person name="Glavina del Rio T."/>
            <person name="Hammon N."/>
            <person name="Israni S."/>
            <person name="Dalin E."/>
            <person name="Tice H."/>
            <person name="Pitluck S."/>
            <person name="Saunders E."/>
            <person name="Brettin T."/>
            <person name="Bruce D."/>
            <person name="Han C."/>
            <person name="Tapia R."/>
            <person name="Gilna P."/>
            <person name="Schmutz J."/>
            <person name="Larimer F."/>
            <person name="Land M."/>
            <person name="Hauser L."/>
            <person name="Kyrpides N."/>
            <person name="Mikhailova N."/>
            <person name="Viollier P."/>
            <person name="Stephens C."/>
            <person name="Richardson P."/>
        </authorList>
    </citation>
    <scope>NUCLEOTIDE SEQUENCE [LARGE SCALE GENOMIC DNA]</scope>
    <source>
        <strain>MCS10</strain>
    </source>
</reference>
<gene>
    <name evidence="1" type="primary">mraY</name>
    <name type="ordered locus">Mmar10_2081</name>
</gene>
<organism>
    <name type="scientific">Maricaulis maris (strain MCS10)</name>
    <name type="common">Caulobacter maris</name>
    <dbReference type="NCBI Taxonomy" id="394221"/>
    <lineage>
        <taxon>Bacteria</taxon>
        <taxon>Pseudomonadati</taxon>
        <taxon>Pseudomonadota</taxon>
        <taxon>Alphaproteobacteria</taxon>
        <taxon>Maricaulales</taxon>
        <taxon>Maricaulaceae</taxon>
        <taxon>Maricaulis</taxon>
    </lineage>
</organism>
<comment type="function">
    <text evidence="1">Catalyzes the initial step of the lipid cycle reactions in the biosynthesis of the cell wall peptidoglycan: transfers peptidoglycan precursor phospho-MurNAc-pentapeptide from UDP-MurNAc-pentapeptide onto the lipid carrier undecaprenyl phosphate, yielding undecaprenyl-pyrophosphoryl-MurNAc-pentapeptide, known as lipid I.</text>
</comment>
<comment type="catalytic activity">
    <reaction evidence="1">
        <text>UDP-N-acetyl-alpha-D-muramoyl-L-alanyl-gamma-D-glutamyl-meso-2,6-diaminopimeloyl-D-alanyl-D-alanine + di-trans,octa-cis-undecaprenyl phosphate = di-trans,octa-cis-undecaprenyl diphospho-N-acetyl-alpha-D-muramoyl-L-alanyl-D-glutamyl-meso-2,6-diaminopimeloyl-D-alanyl-D-alanine + UMP</text>
        <dbReference type="Rhea" id="RHEA:28386"/>
        <dbReference type="ChEBI" id="CHEBI:57865"/>
        <dbReference type="ChEBI" id="CHEBI:60392"/>
        <dbReference type="ChEBI" id="CHEBI:61386"/>
        <dbReference type="ChEBI" id="CHEBI:61387"/>
        <dbReference type="EC" id="2.7.8.13"/>
    </reaction>
</comment>
<comment type="cofactor">
    <cofactor evidence="1">
        <name>Mg(2+)</name>
        <dbReference type="ChEBI" id="CHEBI:18420"/>
    </cofactor>
</comment>
<comment type="pathway">
    <text evidence="1">Cell wall biogenesis; peptidoglycan biosynthesis.</text>
</comment>
<comment type="subcellular location">
    <subcellularLocation>
        <location evidence="1">Cell inner membrane</location>
        <topology evidence="1">Multi-pass membrane protein</topology>
    </subcellularLocation>
</comment>
<comment type="similarity">
    <text evidence="1">Belongs to the glycosyltransferase 4 family. MraY subfamily.</text>
</comment>
<protein>
    <recommendedName>
        <fullName evidence="1">Phospho-N-acetylmuramoyl-pentapeptide-transferase</fullName>
        <ecNumber evidence="1">2.7.8.13</ecNumber>
    </recommendedName>
    <alternativeName>
        <fullName evidence="1">UDP-MurNAc-pentapeptide phosphotransferase</fullName>
    </alternativeName>
</protein>
<name>MRAY_MARMM</name>
<accession>Q0AMW4</accession>
<keyword id="KW-0131">Cell cycle</keyword>
<keyword id="KW-0132">Cell division</keyword>
<keyword id="KW-0997">Cell inner membrane</keyword>
<keyword id="KW-1003">Cell membrane</keyword>
<keyword id="KW-0133">Cell shape</keyword>
<keyword id="KW-0961">Cell wall biogenesis/degradation</keyword>
<keyword id="KW-0460">Magnesium</keyword>
<keyword id="KW-0472">Membrane</keyword>
<keyword id="KW-0479">Metal-binding</keyword>
<keyword id="KW-0573">Peptidoglycan synthesis</keyword>
<keyword id="KW-1185">Reference proteome</keyword>
<keyword id="KW-0808">Transferase</keyword>
<keyword id="KW-0812">Transmembrane</keyword>
<keyword id="KW-1133">Transmembrane helix</keyword>
<evidence type="ECO:0000255" key="1">
    <source>
        <dbReference type="HAMAP-Rule" id="MF_00038"/>
    </source>
</evidence>
<proteinExistence type="inferred from homology"/>
<dbReference type="EC" id="2.7.8.13" evidence="1"/>
<dbReference type="EMBL" id="CP000449">
    <property type="protein sequence ID" value="ABI66373.1"/>
    <property type="molecule type" value="Genomic_DNA"/>
</dbReference>
<dbReference type="RefSeq" id="WP_011644018.1">
    <property type="nucleotide sequence ID" value="NC_008347.1"/>
</dbReference>
<dbReference type="SMR" id="Q0AMW4"/>
<dbReference type="STRING" id="394221.Mmar10_2081"/>
<dbReference type="KEGG" id="mmr:Mmar10_2081"/>
<dbReference type="eggNOG" id="COG0472">
    <property type="taxonomic scope" value="Bacteria"/>
</dbReference>
<dbReference type="HOGENOM" id="CLU_023982_0_0_5"/>
<dbReference type="OrthoDB" id="9805475at2"/>
<dbReference type="UniPathway" id="UPA00219"/>
<dbReference type="Proteomes" id="UP000001964">
    <property type="component" value="Chromosome"/>
</dbReference>
<dbReference type="GO" id="GO:0005886">
    <property type="term" value="C:plasma membrane"/>
    <property type="evidence" value="ECO:0007669"/>
    <property type="project" value="UniProtKB-SubCell"/>
</dbReference>
<dbReference type="GO" id="GO:0046872">
    <property type="term" value="F:metal ion binding"/>
    <property type="evidence" value="ECO:0007669"/>
    <property type="project" value="UniProtKB-KW"/>
</dbReference>
<dbReference type="GO" id="GO:0008963">
    <property type="term" value="F:phospho-N-acetylmuramoyl-pentapeptide-transferase activity"/>
    <property type="evidence" value="ECO:0007669"/>
    <property type="project" value="UniProtKB-UniRule"/>
</dbReference>
<dbReference type="GO" id="GO:0051992">
    <property type="term" value="F:UDP-N-acetylmuramoyl-L-alanyl-D-glutamyl-meso-2,6-diaminopimelyl-D-alanyl-D-alanine:undecaprenyl-phosphate transferase activity"/>
    <property type="evidence" value="ECO:0007669"/>
    <property type="project" value="RHEA"/>
</dbReference>
<dbReference type="GO" id="GO:0051301">
    <property type="term" value="P:cell division"/>
    <property type="evidence" value="ECO:0007669"/>
    <property type="project" value="UniProtKB-KW"/>
</dbReference>
<dbReference type="GO" id="GO:0071555">
    <property type="term" value="P:cell wall organization"/>
    <property type="evidence" value="ECO:0007669"/>
    <property type="project" value="UniProtKB-KW"/>
</dbReference>
<dbReference type="GO" id="GO:0009252">
    <property type="term" value="P:peptidoglycan biosynthetic process"/>
    <property type="evidence" value="ECO:0007669"/>
    <property type="project" value="UniProtKB-UniRule"/>
</dbReference>
<dbReference type="GO" id="GO:0008360">
    <property type="term" value="P:regulation of cell shape"/>
    <property type="evidence" value="ECO:0007669"/>
    <property type="project" value="UniProtKB-KW"/>
</dbReference>
<dbReference type="CDD" id="cd06852">
    <property type="entry name" value="GT_MraY"/>
    <property type="match status" value="1"/>
</dbReference>
<dbReference type="HAMAP" id="MF_00038">
    <property type="entry name" value="MraY"/>
    <property type="match status" value="1"/>
</dbReference>
<dbReference type="InterPro" id="IPR000715">
    <property type="entry name" value="Glycosyl_transferase_4"/>
</dbReference>
<dbReference type="InterPro" id="IPR003524">
    <property type="entry name" value="PNAcMuramoyl-5peptid_Trfase"/>
</dbReference>
<dbReference type="InterPro" id="IPR018480">
    <property type="entry name" value="PNAcMuramoyl-5peptid_Trfase_CS"/>
</dbReference>
<dbReference type="NCBIfam" id="TIGR00445">
    <property type="entry name" value="mraY"/>
    <property type="match status" value="1"/>
</dbReference>
<dbReference type="PANTHER" id="PTHR22926">
    <property type="entry name" value="PHOSPHO-N-ACETYLMURAMOYL-PENTAPEPTIDE-TRANSFERASE"/>
    <property type="match status" value="1"/>
</dbReference>
<dbReference type="PANTHER" id="PTHR22926:SF5">
    <property type="entry name" value="PHOSPHO-N-ACETYLMURAMOYL-PENTAPEPTIDE-TRANSFERASE HOMOLOG"/>
    <property type="match status" value="1"/>
</dbReference>
<dbReference type="Pfam" id="PF00953">
    <property type="entry name" value="Glycos_transf_4"/>
    <property type="match status" value="1"/>
</dbReference>
<dbReference type="Pfam" id="PF10555">
    <property type="entry name" value="MraY_sig1"/>
    <property type="match status" value="1"/>
</dbReference>
<dbReference type="PROSITE" id="PS01348">
    <property type="entry name" value="MRAY_2"/>
    <property type="match status" value="1"/>
</dbReference>
<sequence length="367" mass="39501">MLYLLFAPLADDFQLANLFRYITFRTGGALMTAMLIAFVFGKPMIGWLRRKQGKGQPIRAEGIERHVVEKAGTPTMGGFLILLGVMVGTLLWADLTNAYVWIVIFVTAGFGVIGFIDDYLKVTKQTTAGFGGRFKLVGEFAIALIAVVWATHTARSLGVEPGIETSIAVPFFKDLMINIGPLFFVFGCVVIVGSGNAVNMTDGLDGLAIVPVMIAAATFGVIAYVVGRVDFAEYLQVHYTAGAGEILIFCGALIGAGIGFLWWNAPPAMVFMGDTGSLSLGGALGTIAVAIKHELVLAIVGGLFVLELVSVMVQVASFKLFGKRVFRMAPIHHHFEKKGWAEPTIVIRFWIIAVILALIGLATLKLR</sequence>